<proteinExistence type="inferred from homology"/>
<organism>
    <name type="scientific">Bacillus licheniformis (strain ATCC 14580 / DSM 13 / JCM 2505 / CCUG 7422 / NBRC 12200 / NCIMB 9375 / NCTC 10341 / NRRL NRS-1264 / Gibson 46)</name>
    <dbReference type="NCBI Taxonomy" id="279010"/>
    <lineage>
        <taxon>Bacteria</taxon>
        <taxon>Bacillati</taxon>
        <taxon>Bacillota</taxon>
        <taxon>Bacilli</taxon>
        <taxon>Bacillales</taxon>
        <taxon>Bacillaceae</taxon>
        <taxon>Bacillus</taxon>
    </lineage>
</organism>
<dbReference type="EC" id="2.1.1.182" evidence="1"/>
<dbReference type="EMBL" id="AE017333">
    <property type="protein sequence ID" value="AAU39035.1"/>
    <property type="molecule type" value="Genomic_DNA"/>
</dbReference>
<dbReference type="EMBL" id="CP000002">
    <property type="protein sequence ID" value="AAU21690.1"/>
    <property type="molecule type" value="Genomic_DNA"/>
</dbReference>
<dbReference type="RefSeq" id="WP_003178182.1">
    <property type="nucleotide sequence ID" value="NC_006322.1"/>
</dbReference>
<dbReference type="SMR" id="Q65PH9"/>
<dbReference type="STRING" id="279010.BL00529"/>
<dbReference type="GeneID" id="92858993"/>
<dbReference type="KEGG" id="bld:BLi00055"/>
<dbReference type="KEGG" id="bli:BL00529"/>
<dbReference type="eggNOG" id="COG0030">
    <property type="taxonomic scope" value="Bacteria"/>
</dbReference>
<dbReference type="HOGENOM" id="CLU_041220_0_0_9"/>
<dbReference type="Proteomes" id="UP000000606">
    <property type="component" value="Chromosome"/>
</dbReference>
<dbReference type="GO" id="GO:0005829">
    <property type="term" value="C:cytosol"/>
    <property type="evidence" value="ECO:0007669"/>
    <property type="project" value="TreeGrafter"/>
</dbReference>
<dbReference type="GO" id="GO:0052908">
    <property type="term" value="F:16S rRNA (adenine(1518)-N(6)/adenine(1519)-N(6))-dimethyltransferase activity"/>
    <property type="evidence" value="ECO:0007669"/>
    <property type="project" value="UniProtKB-EC"/>
</dbReference>
<dbReference type="GO" id="GO:0003723">
    <property type="term" value="F:RNA binding"/>
    <property type="evidence" value="ECO:0007669"/>
    <property type="project" value="UniProtKB-KW"/>
</dbReference>
<dbReference type="CDD" id="cd02440">
    <property type="entry name" value="AdoMet_MTases"/>
    <property type="match status" value="1"/>
</dbReference>
<dbReference type="FunFam" id="3.40.50.150:FF:000023">
    <property type="entry name" value="Ribosomal RNA small subunit methyltransferase A"/>
    <property type="match status" value="1"/>
</dbReference>
<dbReference type="Gene3D" id="1.10.8.100">
    <property type="entry name" value="Ribosomal RNA adenine dimethylase-like, domain 2"/>
    <property type="match status" value="1"/>
</dbReference>
<dbReference type="Gene3D" id="3.40.50.150">
    <property type="entry name" value="Vaccinia Virus protein VP39"/>
    <property type="match status" value="1"/>
</dbReference>
<dbReference type="HAMAP" id="MF_00607">
    <property type="entry name" value="16SrRNA_methyltr_A"/>
    <property type="match status" value="1"/>
</dbReference>
<dbReference type="InterPro" id="IPR001737">
    <property type="entry name" value="KsgA/Erm"/>
</dbReference>
<dbReference type="InterPro" id="IPR023165">
    <property type="entry name" value="rRNA_Ade_diMease-like_C"/>
</dbReference>
<dbReference type="InterPro" id="IPR020596">
    <property type="entry name" value="rRNA_Ade_Mease_Trfase_CS"/>
</dbReference>
<dbReference type="InterPro" id="IPR020598">
    <property type="entry name" value="rRNA_Ade_methylase_Trfase_N"/>
</dbReference>
<dbReference type="InterPro" id="IPR011530">
    <property type="entry name" value="rRNA_adenine_dimethylase"/>
</dbReference>
<dbReference type="InterPro" id="IPR029063">
    <property type="entry name" value="SAM-dependent_MTases_sf"/>
</dbReference>
<dbReference type="NCBIfam" id="TIGR00755">
    <property type="entry name" value="ksgA"/>
    <property type="match status" value="1"/>
</dbReference>
<dbReference type="PANTHER" id="PTHR11727">
    <property type="entry name" value="DIMETHYLADENOSINE TRANSFERASE"/>
    <property type="match status" value="1"/>
</dbReference>
<dbReference type="PANTHER" id="PTHR11727:SF7">
    <property type="entry name" value="DIMETHYLADENOSINE TRANSFERASE-RELATED"/>
    <property type="match status" value="1"/>
</dbReference>
<dbReference type="Pfam" id="PF00398">
    <property type="entry name" value="RrnaAD"/>
    <property type="match status" value="1"/>
</dbReference>
<dbReference type="SMART" id="SM00650">
    <property type="entry name" value="rADc"/>
    <property type="match status" value="1"/>
</dbReference>
<dbReference type="SUPFAM" id="SSF53335">
    <property type="entry name" value="S-adenosyl-L-methionine-dependent methyltransferases"/>
    <property type="match status" value="1"/>
</dbReference>
<dbReference type="PROSITE" id="PS01131">
    <property type="entry name" value="RRNA_A_DIMETH"/>
    <property type="match status" value="1"/>
</dbReference>
<dbReference type="PROSITE" id="PS51689">
    <property type="entry name" value="SAM_RNA_A_N6_MT"/>
    <property type="match status" value="1"/>
</dbReference>
<evidence type="ECO:0000255" key="1">
    <source>
        <dbReference type="HAMAP-Rule" id="MF_00607"/>
    </source>
</evidence>
<name>RSMA_BACLD</name>
<feature type="chain" id="PRO_0000101483" description="Ribosomal RNA small subunit methyltransferase A">
    <location>
        <begin position="1"/>
        <end position="292"/>
    </location>
</feature>
<feature type="binding site" evidence="1">
    <location>
        <position position="29"/>
    </location>
    <ligand>
        <name>S-adenosyl-L-methionine</name>
        <dbReference type="ChEBI" id="CHEBI:59789"/>
    </ligand>
</feature>
<feature type="binding site" evidence="1">
    <location>
        <position position="31"/>
    </location>
    <ligand>
        <name>S-adenosyl-L-methionine</name>
        <dbReference type="ChEBI" id="CHEBI:59789"/>
    </ligand>
</feature>
<feature type="binding site" evidence="1">
    <location>
        <position position="56"/>
    </location>
    <ligand>
        <name>S-adenosyl-L-methionine</name>
        <dbReference type="ChEBI" id="CHEBI:59789"/>
    </ligand>
</feature>
<feature type="binding site" evidence="1">
    <location>
        <position position="77"/>
    </location>
    <ligand>
        <name>S-adenosyl-L-methionine</name>
        <dbReference type="ChEBI" id="CHEBI:59789"/>
    </ligand>
</feature>
<feature type="binding site" evidence="1">
    <location>
        <position position="102"/>
    </location>
    <ligand>
        <name>S-adenosyl-L-methionine</name>
        <dbReference type="ChEBI" id="CHEBI:59789"/>
    </ligand>
</feature>
<feature type="binding site" evidence="1">
    <location>
        <position position="127"/>
    </location>
    <ligand>
        <name>S-adenosyl-L-methionine</name>
        <dbReference type="ChEBI" id="CHEBI:59789"/>
    </ligand>
</feature>
<gene>
    <name evidence="1" type="primary">rsmA</name>
    <name evidence="1" type="synonym">ksgA</name>
    <name type="ordered locus">BLi00055</name>
    <name type="ordered locus">BL00529</name>
</gene>
<accession>Q65PH9</accession>
<accession>Q62ZW8</accession>
<sequence length="292" mass="32759">MNKDIATPIRTKEILNKYGFSFKKSLGQNFLIDTNILDRIVDHAGVTERTGVIEIGPGIGALTEQLAKRAKKVTAFEIDQRLLPILEDTLSPYDNVTVIHQDVLKADVRAVMDEQFQDCDEVMVVANLPYYVTTPIIMKLLEENLPLKGIVVMLQKEVADRMAAKPSSKEYGSLSIAVQFYTEAKTVMNVPKTVFVPQPNVDSAVIRLTLRKEPAVAVQDAAFFFQVVKASFAQRRKTLFNNLVNNLPNGKENKSKIERALQDSHIDGKRRGESLSIEEFAVLSDRLREVLL</sequence>
<keyword id="KW-0963">Cytoplasm</keyword>
<keyword id="KW-0489">Methyltransferase</keyword>
<keyword id="KW-1185">Reference proteome</keyword>
<keyword id="KW-0694">RNA-binding</keyword>
<keyword id="KW-0698">rRNA processing</keyword>
<keyword id="KW-0949">S-adenosyl-L-methionine</keyword>
<keyword id="KW-0808">Transferase</keyword>
<reference key="1">
    <citation type="journal article" date="2004" name="J. Mol. Microbiol. Biotechnol.">
        <title>The complete genome sequence of Bacillus licheniformis DSM13, an organism with great industrial potential.</title>
        <authorList>
            <person name="Veith B."/>
            <person name="Herzberg C."/>
            <person name="Steckel S."/>
            <person name="Feesche J."/>
            <person name="Maurer K.H."/>
            <person name="Ehrenreich P."/>
            <person name="Baeumer S."/>
            <person name="Henne A."/>
            <person name="Liesegang H."/>
            <person name="Merkl R."/>
            <person name="Ehrenreich A."/>
            <person name="Gottschalk G."/>
        </authorList>
    </citation>
    <scope>NUCLEOTIDE SEQUENCE [LARGE SCALE GENOMIC DNA]</scope>
    <source>
        <strain>ATCC 14580 / DSM 13 / JCM 2505 / CCUG 7422 / NBRC 12200 / NCIMB 9375 / NCTC 10341 / NRRL NRS-1264 / Gibson 46</strain>
    </source>
</reference>
<reference key="2">
    <citation type="journal article" date="2004" name="Genome Biol.">
        <title>Complete genome sequence of the industrial bacterium Bacillus licheniformis and comparisons with closely related Bacillus species.</title>
        <authorList>
            <person name="Rey M.W."/>
            <person name="Ramaiya P."/>
            <person name="Nelson B.A."/>
            <person name="Brody-Karpin S.D."/>
            <person name="Zaretsky E.J."/>
            <person name="Tang M."/>
            <person name="Lopez de Leon A."/>
            <person name="Xiang H."/>
            <person name="Gusti V."/>
            <person name="Clausen I.G."/>
            <person name="Olsen P.B."/>
            <person name="Rasmussen M.D."/>
            <person name="Andersen J.T."/>
            <person name="Joergensen P.L."/>
            <person name="Larsen T.S."/>
            <person name="Sorokin A."/>
            <person name="Bolotin A."/>
            <person name="Lapidus A."/>
            <person name="Galleron N."/>
            <person name="Ehrlich S.D."/>
            <person name="Berka R.M."/>
        </authorList>
    </citation>
    <scope>NUCLEOTIDE SEQUENCE [LARGE SCALE GENOMIC DNA]</scope>
    <source>
        <strain>ATCC 14580 / DSM 13 / JCM 2505 / CCUG 7422 / NBRC 12200 / NCIMB 9375 / NCTC 10341 / NRRL NRS-1264 / Gibson 46</strain>
    </source>
</reference>
<protein>
    <recommendedName>
        <fullName evidence="1">Ribosomal RNA small subunit methyltransferase A</fullName>
        <ecNumber evidence="1">2.1.1.182</ecNumber>
    </recommendedName>
    <alternativeName>
        <fullName evidence="1">16S rRNA (adenine(1518)-N(6)/adenine(1519)-N(6))-dimethyltransferase</fullName>
    </alternativeName>
    <alternativeName>
        <fullName evidence="1">16S rRNA dimethyladenosine transferase</fullName>
    </alternativeName>
    <alternativeName>
        <fullName evidence="1">16S rRNA dimethylase</fullName>
    </alternativeName>
    <alternativeName>
        <fullName evidence="1">S-adenosylmethionine-6-N', N'-adenosyl(rRNA) dimethyltransferase</fullName>
    </alternativeName>
</protein>
<comment type="function">
    <text evidence="1">Specifically dimethylates two adjacent adenosines (A1518 and A1519) in the loop of a conserved hairpin near the 3'-end of 16S rRNA in the 30S particle. May play a critical role in biogenesis of 30S subunits.</text>
</comment>
<comment type="catalytic activity">
    <reaction evidence="1">
        <text>adenosine(1518)/adenosine(1519) in 16S rRNA + 4 S-adenosyl-L-methionine = N(6)-dimethyladenosine(1518)/N(6)-dimethyladenosine(1519) in 16S rRNA + 4 S-adenosyl-L-homocysteine + 4 H(+)</text>
        <dbReference type="Rhea" id="RHEA:19609"/>
        <dbReference type="Rhea" id="RHEA-COMP:10232"/>
        <dbReference type="Rhea" id="RHEA-COMP:10233"/>
        <dbReference type="ChEBI" id="CHEBI:15378"/>
        <dbReference type="ChEBI" id="CHEBI:57856"/>
        <dbReference type="ChEBI" id="CHEBI:59789"/>
        <dbReference type="ChEBI" id="CHEBI:74411"/>
        <dbReference type="ChEBI" id="CHEBI:74493"/>
        <dbReference type="EC" id="2.1.1.182"/>
    </reaction>
</comment>
<comment type="subcellular location">
    <subcellularLocation>
        <location evidence="1">Cytoplasm</location>
    </subcellularLocation>
</comment>
<comment type="similarity">
    <text evidence="1">Belongs to the class I-like SAM-binding methyltransferase superfamily. rRNA adenine N(6)-methyltransferase family. RsmA subfamily.</text>
</comment>